<accession>Q7TQB9</accession>
<accession>A7MAX5</accession>
<accession>Q2NL43</accession>
<protein>
    <recommendedName>
        <fullName>Taste receptor type 2 member 143</fullName>
        <shortName>T2R143</shortName>
    </recommendedName>
    <alternativeName>
        <fullName>Taste receptor type 2 member 43</fullName>
        <shortName>T2R43</shortName>
        <shortName>mT2R36</shortName>
    </alternativeName>
</protein>
<comment type="function">
    <text evidence="2">Putative taste receptor which may play a role in the perception of bitterness.</text>
</comment>
<comment type="subcellular location">
    <subcellularLocation>
        <location>Membrane</location>
        <topology>Multi-pass membrane protein</topology>
    </subcellularLocation>
</comment>
<comment type="miscellaneous">
    <text>Several bitter taste receptors are expressed in a single taste receptor cell.</text>
</comment>
<comment type="similarity">
    <text evidence="3">Belongs to the G-protein coupled receptor T2R family.</text>
</comment>
<evidence type="ECO:0000255" key="1"/>
<evidence type="ECO:0000303" key="2">
    <source>
    </source>
</evidence>
<evidence type="ECO:0000305" key="3"/>
<evidence type="ECO:0000312" key="4">
    <source>
        <dbReference type="EMBL" id="AAN63042.1"/>
    </source>
</evidence>
<keyword id="KW-0297">G-protein coupled receptor</keyword>
<keyword id="KW-0325">Glycoprotein</keyword>
<keyword id="KW-0472">Membrane</keyword>
<keyword id="KW-0675">Receptor</keyword>
<keyword id="KW-1185">Reference proteome</keyword>
<keyword id="KW-0716">Sensory transduction</keyword>
<keyword id="KW-0919">Taste</keyword>
<keyword id="KW-0807">Transducer</keyword>
<keyword id="KW-0812">Transmembrane</keyword>
<keyword id="KW-1133">Transmembrane helix</keyword>
<dbReference type="EMBL" id="AY145467">
    <property type="protein sequence ID" value="AAN63042.1"/>
    <property type="molecule type" value="Genomic_DNA"/>
</dbReference>
<dbReference type="EMBL" id="AC153022">
    <property type="status" value="NOT_ANNOTATED_CDS"/>
    <property type="molecule type" value="Genomic_DNA"/>
</dbReference>
<dbReference type="EMBL" id="BC111103">
    <property type="protein sequence ID" value="AAI11104.1"/>
    <property type="molecule type" value="mRNA"/>
</dbReference>
<dbReference type="EMBL" id="BC148239">
    <property type="protein sequence ID" value="AAI48240.1"/>
    <property type="molecule type" value="mRNA"/>
</dbReference>
<dbReference type="EMBL" id="BK001096">
    <property type="protein sequence ID" value="DAA01235.1"/>
    <property type="molecule type" value="Genomic_DNA"/>
</dbReference>
<dbReference type="CCDS" id="CCDS20068.1"/>
<dbReference type="RefSeq" id="NP_001001452.1">
    <property type="nucleotide sequence ID" value="NM_001001452.1"/>
</dbReference>
<dbReference type="SMR" id="Q7TQB9"/>
<dbReference type="FunCoup" id="Q7TQB9">
    <property type="interactions" value="132"/>
</dbReference>
<dbReference type="STRING" id="10090.ENSMUSP00000057910"/>
<dbReference type="GlyCosmos" id="Q7TQB9">
    <property type="glycosylation" value="1 site, No reported glycans"/>
</dbReference>
<dbReference type="GlyGen" id="Q7TQB9">
    <property type="glycosylation" value="2 sites, 1 O-linked glycan (1 site)"/>
</dbReference>
<dbReference type="PaxDb" id="10090-ENSMUSP00000057910"/>
<dbReference type="DNASU" id="387514"/>
<dbReference type="Ensembl" id="ENSMUST00000057398.4">
    <property type="protein sequence ID" value="ENSMUSP00000057910.4"/>
    <property type="gene ID" value="ENSMUSG00000046652.4"/>
</dbReference>
<dbReference type="GeneID" id="387514"/>
<dbReference type="KEGG" id="mmu:387514"/>
<dbReference type="UCSC" id="uc009brf.1">
    <property type="organism name" value="mouse"/>
</dbReference>
<dbReference type="AGR" id="MGI:2681310"/>
<dbReference type="CTD" id="387514"/>
<dbReference type="MGI" id="MGI:2681310">
    <property type="gene designation" value="Tas2r143"/>
</dbReference>
<dbReference type="VEuPathDB" id="HostDB:ENSMUSG00000046652"/>
<dbReference type="eggNOG" id="ENOG502S2SI">
    <property type="taxonomic scope" value="Eukaryota"/>
</dbReference>
<dbReference type="GeneTree" id="ENSGT01100000263477"/>
<dbReference type="HOGENOM" id="CLU_072337_1_1_1"/>
<dbReference type="InParanoid" id="Q7TQB9"/>
<dbReference type="OMA" id="KWRISQL"/>
<dbReference type="OrthoDB" id="8876749at2759"/>
<dbReference type="PhylomeDB" id="Q7TQB9"/>
<dbReference type="TreeFam" id="TF335891"/>
<dbReference type="BioGRID-ORCS" id="387514">
    <property type="hits" value="0 hits in 76 CRISPR screens"/>
</dbReference>
<dbReference type="PRO" id="PR:Q7TQB9"/>
<dbReference type="Proteomes" id="UP000000589">
    <property type="component" value="Chromosome 6"/>
</dbReference>
<dbReference type="RNAct" id="Q7TQB9">
    <property type="molecule type" value="protein"/>
</dbReference>
<dbReference type="Bgee" id="ENSMUSG00000046652">
    <property type="expression patterns" value="Expressed in dorsal root ganglion and 24 other cell types or tissues"/>
</dbReference>
<dbReference type="GO" id="GO:0016020">
    <property type="term" value="C:membrane"/>
    <property type="evidence" value="ECO:0000303"/>
    <property type="project" value="UniProtKB"/>
</dbReference>
<dbReference type="GO" id="GO:0033038">
    <property type="term" value="F:bitter taste receptor activity"/>
    <property type="evidence" value="ECO:0007669"/>
    <property type="project" value="InterPro"/>
</dbReference>
<dbReference type="GO" id="GO:0004930">
    <property type="term" value="F:G protein-coupled receptor activity"/>
    <property type="evidence" value="ECO:0007669"/>
    <property type="project" value="UniProtKB-KW"/>
</dbReference>
<dbReference type="GO" id="GO:0008527">
    <property type="term" value="F:taste receptor activity"/>
    <property type="evidence" value="ECO:0000303"/>
    <property type="project" value="UniProtKB"/>
</dbReference>
<dbReference type="GO" id="GO:0001580">
    <property type="term" value="P:detection of chemical stimulus involved in sensory perception of bitter taste"/>
    <property type="evidence" value="ECO:0000303"/>
    <property type="project" value="UniProtKB"/>
</dbReference>
<dbReference type="CDD" id="cd15017">
    <property type="entry name" value="7tm_TAS2R16"/>
    <property type="match status" value="1"/>
</dbReference>
<dbReference type="FunFam" id="1.20.1070.10:FF:000055">
    <property type="entry name" value="Taste receptor type 2"/>
    <property type="match status" value="1"/>
</dbReference>
<dbReference type="Gene3D" id="1.20.1070.10">
    <property type="entry name" value="Rhodopsin 7-helix transmembrane proteins"/>
    <property type="match status" value="1"/>
</dbReference>
<dbReference type="InterPro" id="IPR007960">
    <property type="entry name" value="TAS2R"/>
</dbReference>
<dbReference type="PANTHER" id="PTHR11394">
    <property type="entry name" value="TASTE RECEPTOR TYPE 2"/>
    <property type="match status" value="1"/>
</dbReference>
<dbReference type="PANTHER" id="PTHR11394:SF71">
    <property type="entry name" value="TASTE RECEPTOR TYPE 2 MEMBER 143"/>
    <property type="match status" value="1"/>
</dbReference>
<dbReference type="Pfam" id="PF05296">
    <property type="entry name" value="TAS2R"/>
    <property type="match status" value="1"/>
</dbReference>
<dbReference type="SUPFAM" id="SSF81321">
    <property type="entry name" value="Family A G protein-coupled receptor-like"/>
    <property type="match status" value="1"/>
</dbReference>
<proteinExistence type="evidence at transcript level"/>
<gene>
    <name type="primary">Tas2r143</name>
    <name type="synonym">T2r36</name>
    <name type="synonym">Tas2r43</name>
</gene>
<reference evidence="4" key="1">
    <citation type="journal article" date="2003" name="Physiol. Genomics">
        <title>Evolutionary relationships of the Tas2r receptor gene families in mouse and human.</title>
        <authorList>
            <person name="Conte C."/>
            <person name="Ebeling M."/>
            <person name="Marcuz A."/>
            <person name="Nef P."/>
            <person name="Andres-Barquin P.J."/>
        </authorList>
    </citation>
    <scope>NUCLEOTIDE SEQUENCE [GENOMIC DNA]</scope>
    <source>
        <strain evidence="4">C57BL/6J</strain>
    </source>
</reference>
<reference key="2">
    <citation type="journal article" date="2009" name="PLoS Biol.">
        <title>Lineage-specific biology revealed by a finished genome assembly of the mouse.</title>
        <authorList>
            <person name="Church D.M."/>
            <person name="Goodstadt L."/>
            <person name="Hillier L.W."/>
            <person name="Zody M.C."/>
            <person name="Goldstein S."/>
            <person name="She X."/>
            <person name="Bult C.J."/>
            <person name="Agarwala R."/>
            <person name="Cherry J.L."/>
            <person name="DiCuccio M."/>
            <person name="Hlavina W."/>
            <person name="Kapustin Y."/>
            <person name="Meric P."/>
            <person name="Maglott D."/>
            <person name="Birtle Z."/>
            <person name="Marques A.C."/>
            <person name="Graves T."/>
            <person name="Zhou S."/>
            <person name="Teague B."/>
            <person name="Potamousis K."/>
            <person name="Churas C."/>
            <person name="Place M."/>
            <person name="Herschleb J."/>
            <person name="Runnheim R."/>
            <person name="Forrest D."/>
            <person name="Amos-Landgraf J."/>
            <person name="Schwartz D.C."/>
            <person name="Cheng Z."/>
            <person name="Lindblad-Toh K."/>
            <person name="Eichler E.E."/>
            <person name="Ponting C.P."/>
        </authorList>
    </citation>
    <scope>NUCLEOTIDE SEQUENCE [LARGE SCALE GENOMIC DNA]</scope>
    <source>
        <strain>C57BL/6J</strain>
    </source>
</reference>
<reference key="3">
    <citation type="journal article" date="2004" name="Genome Res.">
        <title>The status, quality, and expansion of the NIH full-length cDNA project: the Mammalian Gene Collection (MGC).</title>
        <authorList>
            <consortium name="The MGC Project Team"/>
        </authorList>
    </citation>
    <scope>NUCLEOTIDE SEQUENCE [LARGE SCALE MRNA]</scope>
</reference>
<reference evidence="3" key="4">
    <citation type="journal article" date="2003" name="Mol. Biol. Evol.">
        <title>Adaptive diversification of bitter taste receptor genes in mammalian evolution.</title>
        <authorList>
            <person name="Shi P."/>
            <person name="Zhang J."/>
            <person name="Yang H."/>
            <person name="Zhang Y.-P."/>
        </authorList>
    </citation>
    <scope>IDENTIFICATION</scope>
</reference>
<sequence length="293" mass="34045">MPSTPTLIFIIIFYLVSLASMLQNGFMMIVLGREWMRNRTLPAADMIVASLASSRFCLHGIAILANLLASFDFCYQANLIGILWDFTNTLIFWLTAWLAIFYCVKISSFSHPVLFWLKWRISQLVPRLLVVSLIIGGLSAVISATGNFMANQMTISQGFHGNCTFGHMSLDFYRYYYLYHSVLMWFTPFFLFLVSVIVLMFSLYQHVEKMRGHRPGPWDLHTQAHTMALKSLTFFFIFYIFFFLALVISSTKRKSMQSYYWAREAIIYTGIFLNSIILLFSNPKLRKALKMRF</sequence>
<organism evidence="4">
    <name type="scientific">Mus musculus</name>
    <name type="common">Mouse</name>
    <dbReference type="NCBI Taxonomy" id="10090"/>
    <lineage>
        <taxon>Eukaryota</taxon>
        <taxon>Metazoa</taxon>
        <taxon>Chordata</taxon>
        <taxon>Craniata</taxon>
        <taxon>Vertebrata</taxon>
        <taxon>Euteleostomi</taxon>
        <taxon>Mammalia</taxon>
        <taxon>Eutheria</taxon>
        <taxon>Euarchontoglires</taxon>
        <taxon>Glires</taxon>
        <taxon>Rodentia</taxon>
        <taxon>Myomorpha</taxon>
        <taxon>Muroidea</taxon>
        <taxon>Muridae</taxon>
        <taxon>Murinae</taxon>
        <taxon>Mus</taxon>
        <taxon>Mus</taxon>
    </lineage>
</organism>
<feature type="chain" id="PRO_0000082307" description="Taste receptor type 2 member 143">
    <location>
        <begin position="1"/>
        <end position="293"/>
    </location>
</feature>
<feature type="topological domain" description="Extracellular" evidence="1">
    <location>
        <begin position="1"/>
        <end position="6"/>
    </location>
</feature>
<feature type="transmembrane region" description="Helical; Name=1" evidence="1">
    <location>
        <begin position="7"/>
        <end position="27"/>
    </location>
</feature>
<feature type="topological domain" description="Cytoplasmic" evidence="1">
    <location>
        <begin position="28"/>
        <end position="55"/>
    </location>
</feature>
<feature type="transmembrane region" description="Helical; Name=2" evidence="1">
    <location>
        <begin position="56"/>
        <end position="76"/>
    </location>
</feature>
<feature type="topological domain" description="Extracellular" evidence="1">
    <location>
        <begin position="77"/>
        <end position="79"/>
    </location>
</feature>
<feature type="transmembrane region" description="Helical; Name=3" evidence="1">
    <location>
        <begin position="80"/>
        <end position="100"/>
    </location>
</feature>
<feature type="topological domain" description="Cytoplasmic" evidence="1">
    <location>
        <begin position="101"/>
        <end position="127"/>
    </location>
</feature>
<feature type="transmembrane region" description="Helical; Name=4" evidence="1">
    <location>
        <begin position="128"/>
        <end position="148"/>
    </location>
</feature>
<feature type="topological domain" description="Extracellular" evidence="1">
    <location>
        <begin position="149"/>
        <end position="181"/>
    </location>
</feature>
<feature type="transmembrane region" description="Helical; Name=5" evidence="1">
    <location>
        <begin position="182"/>
        <end position="202"/>
    </location>
</feature>
<feature type="topological domain" description="Cytoplasmic" evidence="1">
    <location>
        <begin position="203"/>
        <end position="227"/>
    </location>
</feature>
<feature type="transmembrane region" description="Helical; Name=6" evidence="1">
    <location>
        <begin position="228"/>
        <end position="248"/>
    </location>
</feature>
<feature type="topological domain" description="Extracellular" evidence="1">
    <location>
        <begin position="249"/>
        <end position="264"/>
    </location>
</feature>
<feature type="transmembrane region" description="Helical; Name=7" evidence="1">
    <location>
        <begin position="265"/>
        <end position="285"/>
    </location>
</feature>
<feature type="topological domain" description="Cytoplasmic" evidence="1">
    <location>
        <begin position="286"/>
        <end position="293"/>
    </location>
</feature>
<feature type="glycosylation site" description="N-linked (GlcNAc...) asparagine" evidence="1">
    <location>
        <position position="162"/>
    </location>
</feature>
<name>TR143_MOUSE</name>